<comment type="function">
    <text evidence="5">Required for the degradation of gamma-aminobutyric acid (GABA), which is important for utilization of GABA as nitrogen source. Deaminates GABA to succinate-semialdehyde, which in turn is converted to succinate by the succinate semialdehyde dehydrogenase. Cannot transaminate beta-alanine (BAL).</text>
</comment>
<comment type="catalytic activity">
    <reaction evidence="5">
        <text>4-aminobutanoate + 2-oxoglutarate = succinate semialdehyde + L-glutamate</text>
        <dbReference type="Rhea" id="RHEA:23352"/>
        <dbReference type="ChEBI" id="CHEBI:16810"/>
        <dbReference type="ChEBI" id="CHEBI:29985"/>
        <dbReference type="ChEBI" id="CHEBI:57706"/>
        <dbReference type="ChEBI" id="CHEBI:59888"/>
        <dbReference type="EC" id="2.6.1.19"/>
    </reaction>
</comment>
<comment type="cofactor">
    <cofactor evidence="1">
        <name>pyridoxal 5'-phosphate</name>
        <dbReference type="ChEBI" id="CHEBI:597326"/>
    </cofactor>
</comment>
<comment type="subunit">
    <text evidence="5">Homodimer.</text>
</comment>
<comment type="subcellular location">
    <subcellularLocation>
        <location evidence="4">Cytoplasm</location>
    </subcellularLocation>
</comment>
<comment type="similarity">
    <text evidence="6">Belongs to the class-III pyridoxal-phosphate-dependent aminotransferase family.</text>
</comment>
<organism>
    <name type="scientific">Schizosaccharomyces pombe (strain 972 / ATCC 24843)</name>
    <name type="common">Fission yeast</name>
    <dbReference type="NCBI Taxonomy" id="284812"/>
    <lineage>
        <taxon>Eukaryota</taxon>
        <taxon>Fungi</taxon>
        <taxon>Dikarya</taxon>
        <taxon>Ascomycota</taxon>
        <taxon>Taphrinomycotina</taxon>
        <taxon>Schizosaccharomycetes</taxon>
        <taxon>Schizosaccharomycetales</taxon>
        <taxon>Schizosaccharomycetaceae</taxon>
        <taxon>Schizosaccharomyces</taxon>
    </lineage>
</organism>
<accession>O13837</accession>
<protein>
    <recommendedName>
        <fullName>4-aminobutyrate aminotransferase</fullName>
        <ecNumber evidence="5">2.6.1.19</ecNumber>
    </recommendedName>
    <alternativeName>
        <fullName>GABA aminotransferase</fullName>
        <shortName>GABA-AT</shortName>
    </alternativeName>
    <alternativeName>
        <fullName>Gamma-amino-N-butyrate transaminase</fullName>
        <shortName>GABA transaminase</shortName>
    </alternativeName>
</protein>
<gene>
    <name type="primary">uga1</name>
    <name type="ORF">SPAC19D5.07</name>
</gene>
<reference key="1">
    <citation type="journal article" date="2002" name="Nature">
        <title>The genome sequence of Schizosaccharomyces pombe.</title>
        <authorList>
            <person name="Wood V."/>
            <person name="Gwilliam R."/>
            <person name="Rajandream M.A."/>
            <person name="Lyne M.H."/>
            <person name="Lyne R."/>
            <person name="Stewart A."/>
            <person name="Sgouros J.G."/>
            <person name="Peat N."/>
            <person name="Hayles J."/>
            <person name="Baker S.G."/>
            <person name="Basham D."/>
            <person name="Bowman S."/>
            <person name="Brooks K."/>
            <person name="Brown D."/>
            <person name="Brown S."/>
            <person name="Chillingworth T."/>
            <person name="Churcher C.M."/>
            <person name="Collins M."/>
            <person name="Connor R."/>
            <person name="Cronin A."/>
            <person name="Davis P."/>
            <person name="Feltwell T."/>
            <person name="Fraser A."/>
            <person name="Gentles S."/>
            <person name="Goble A."/>
            <person name="Hamlin N."/>
            <person name="Harris D.E."/>
            <person name="Hidalgo J."/>
            <person name="Hodgson G."/>
            <person name="Holroyd S."/>
            <person name="Hornsby T."/>
            <person name="Howarth S."/>
            <person name="Huckle E.J."/>
            <person name="Hunt S."/>
            <person name="Jagels K."/>
            <person name="James K.D."/>
            <person name="Jones L."/>
            <person name="Jones M."/>
            <person name="Leather S."/>
            <person name="McDonald S."/>
            <person name="McLean J."/>
            <person name="Mooney P."/>
            <person name="Moule S."/>
            <person name="Mungall K.L."/>
            <person name="Murphy L.D."/>
            <person name="Niblett D."/>
            <person name="Odell C."/>
            <person name="Oliver K."/>
            <person name="O'Neil S."/>
            <person name="Pearson D."/>
            <person name="Quail M.A."/>
            <person name="Rabbinowitsch E."/>
            <person name="Rutherford K.M."/>
            <person name="Rutter S."/>
            <person name="Saunders D."/>
            <person name="Seeger K."/>
            <person name="Sharp S."/>
            <person name="Skelton J."/>
            <person name="Simmonds M.N."/>
            <person name="Squares R."/>
            <person name="Squares S."/>
            <person name="Stevens K."/>
            <person name="Taylor K."/>
            <person name="Taylor R.G."/>
            <person name="Tivey A."/>
            <person name="Walsh S.V."/>
            <person name="Warren T."/>
            <person name="Whitehead S."/>
            <person name="Woodward J.R."/>
            <person name="Volckaert G."/>
            <person name="Aert R."/>
            <person name="Robben J."/>
            <person name="Grymonprez B."/>
            <person name="Weltjens I."/>
            <person name="Vanstreels E."/>
            <person name="Rieger M."/>
            <person name="Schaefer M."/>
            <person name="Mueller-Auer S."/>
            <person name="Gabel C."/>
            <person name="Fuchs M."/>
            <person name="Duesterhoeft A."/>
            <person name="Fritzc C."/>
            <person name="Holzer E."/>
            <person name="Moestl D."/>
            <person name="Hilbert H."/>
            <person name="Borzym K."/>
            <person name="Langer I."/>
            <person name="Beck A."/>
            <person name="Lehrach H."/>
            <person name="Reinhardt R."/>
            <person name="Pohl T.M."/>
            <person name="Eger P."/>
            <person name="Zimmermann W."/>
            <person name="Wedler H."/>
            <person name="Wambutt R."/>
            <person name="Purnelle B."/>
            <person name="Goffeau A."/>
            <person name="Cadieu E."/>
            <person name="Dreano S."/>
            <person name="Gloux S."/>
            <person name="Lelaure V."/>
            <person name="Mottier S."/>
            <person name="Galibert F."/>
            <person name="Aves S.J."/>
            <person name="Xiang Z."/>
            <person name="Hunt C."/>
            <person name="Moore K."/>
            <person name="Hurst S.M."/>
            <person name="Lucas M."/>
            <person name="Rochet M."/>
            <person name="Gaillardin C."/>
            <person name="Tallada V.A."/>
            <person name="Garzon A."/>
            <person name="Thode G."/>
            <person name="Daga R.R."/>
            <person name="Cruzado L."/>
            <person name="Jimenez J."/>
            <person name="Sanchez M."/>
            <person name="del Rey F."/>
            <person name="Benito J."/>
            <person name="Dominguez A."/>
            <person name="Revuelta J.L."/>
            <person name="Moreno S."/>
            <person name="Armstrong J."/>
            <person name="Forsburg S.L."/>
            <person name="Cerutti L."/>
            <person name="Lowe T."/>
            <person name="McCombie W.R."/>
            <person name="Paulsen I."/>
            <person name="Potashkin J."/>
            <person name="Shpakovski G.V."/>
            <person name="Ussery D."/>
            <person name="Barrell B.G."/>
            <person name="Nurse P."/>
        </authorList>
    </citation>
    <scope>NUCLEOTIDE SEQUENCE [LARGE SCALE GENOMIC DNA]</scope>
    <source>
        <strain>972 / ATCC 24843</strain>
    </source>
</reference>
<reference key="2">
    <citation type="journal article" date="2006" name="Nat. Biotechnol.">
        <title>ORFeome cloning and global analysis of protein localization in the fission yeast Schizosaccharomyces pombe.</title>
        <authorList>
            <person name="Matsuyama A."/>
            <person name="Arai R."/>
            <person name="Yashiroda Y."/>
            <person name="Shirai A."/>
            <person name="Kamata A."/>
            <person name="Sekido S."/>
            <person name="Kobayashi Y."/>
            <person name="Hashimoto A."/>
            <person name="Hamamoto M."/>
            <person name="Hiraoka Y."/>
            <person name="Horinouchi S."/>
            <person name="Yoshida M."/>
        </authorList>
    </citation>
    <scope>SUBCELLULAR LOCATION [LARGE SCALE ANALYSIS]</scope>
</reference>
<reference key="3">
    <citation type="journal article" date="2007" name="FEBS J.">
        <title>A gene duplication led to specialized gamma-aminobutyrate and beta-alanine aminotransferase in yeast.</title>
        <authorList>
            <person name="Andersen G."/>
            <person name="Andersen B."/>
            <person name="Dobritzsch D."/>
            <person name="Schnackerz K.D."/>
            <person name="Piskur J."/>
        </authorList>
    </citation>
    <scope>FUNCTION</scope>
    <scope>CATALYTIC ACTIVITY</scope>
    <scope>SUBUNIT</scope>
</reference>
<keyword id="KW-0032">Aminotransferase</keyword>
<keyword id="KW-0963">Cytoplasm</keyword>
<keyword id="KW-0663">Pyridoxal phosphate</keyword>
<keyword id="KW-1185">Reference proteome</keyword>
<keyword id="KW-0808">Transferase</keyword>
<name>GABAT_SCHPO</name>
<dbReference type="EC" id="2.6.1.19" evidence="5"/>
<dbReference type="EMBL" id="CU329670">
    <property type="protein sequence ID" value="CAB16717.1"/>
    <property type="molecule type" value="Genomic_DNA"/>
</dbReference>
<dbReference type="PIR" id="T37967">
    <property type="entry name" value="T37967"/>
</dbReference>
<dbReference type="RefSeq" id="NP_594905.1">
    <property type="nucleotide sequence ID" value="NM_001020336.2"/>
</dbReference>
<dbReference type="SMR" id="O13837"/>
<dbReference type="BioGRID" id="278953">
    <property type="interactions" value="3"/>
</dbReference>
<dbReference type="FunCoup" id="O13837">
    <property type="interactions" value="279"/>
</dbReference>
<dbReference type="STRING" id="284812.O13837"/>
<dbReference type="PaxDb" id="4896-SPAC19D5.07.1"/>
<dbReference type="EnsemblFungi" id="SPAC19D5.07.1">
    <property type="protein sequence ID" value="SPAC19D5.07.1:pep"/>
    <property type="gene ID" value="SPAC19D5.07"/>
</dbReference>
<dbReference type="GeneID" id="2542494"/>
<dbReference type="KEGG" id="spo:2542494"/>
<dbReference type="PomBase" id="SPAC19D5.07">
    <property type="gene designation" value="uga1"/>
</dbReference>
<dbReference type="VEuPathDB" id="FungiDB:SPAC19D5.07"/>
<dbReference type="eggNOG" id="KOG1405">
    <property type="taxonomic scope" value="Eukaryota"/>
</dbReference>
<dbReference type="HOGENOM" id="CLU_016922_12_0_1"/>
<dbReference type="InParanoid" id="O13837"/>
<dbReference type="OMA" id="GLMCAFD"/>
<dbReference type="PhylomeDB" id="O13837"/>
<dbReference type="BRENDA" id="2.6.1.19">
    <property type="organism ID" value="5613"/>
</dbReference>
<dbReference type="Reactome" id="R-SPO-916853">
    <property type="pathway name" value="Degradation of GABA"/>
</dbReference>
<dbReference type="PRO" id="PR:O13837"/>
<dbReference type="Proteomes" id="UP000002485">
    <property type="component" value="Chromosome I"/>
</dbReference>
<dbReference type="GO" id="GO:0005829">
    <property type="term" value="C:cytosol"/>
    <property type="evidence" value="ECO:0007005"/>
    <property type="project" value="PomBase"/>
</dbReference>
<dbReference type="GO" id="GO:0005739">
    <property type="term" value="C:mitochondrion"/>
    <property type="evidence" value="ECO:0000318"/>
    <property type="project" value="GO_Central"/>
</dbReference>
<dbReference type="GO" id="GO:0034386">
    <property type="term" value="F:4-aminobutyrate:2-oxoglutarate transaminase activity"/>
    <property type="evidence" value="ECO:0000314"/>
    <property type="project" value="PomBase"/>
</dbReference>
<dbReference type="GO" id="GO:0030170">
    <property type="term" value="F:pyridoxal phosphate binding"/>
    <property type="evidence" value="ECO:0000314"/>
    <property type="project" value="PomBase"/>
</dbReference>
<dbReference type="GO" id="GO:0009450">
    <property type="term" value="P:gamma-aminobutyric acid catabolic process"/>
    <property type="evidence" value="ECO:0000318"/>
    <property type="project" value="GO_Central"/>
</dbReference>
<dbReference type="GO" id="GO:0006538">
    <property type="term" value="P:glutamate catabolic process"/>
    <property type="evidence" value="ECO:0000269"/>
    <property type="project" value="PomBase"/>
</dbReference>
<dbReference type="CDD" id="cd00610">
    <property type="entry name" value="OAT_like"/>
    <property type="match status" value="1"/>
</dbReference>
<dbReference type="FunFam" id="3.40.640.10:FF:000073">
    <property type="entry name" value="Probable 4-aminobutyrate aminotransferase"/>
    <property type="match status" value="1"/>
</dbReference>
<dbReference type="Gene3D" id="3.90.1150.10">
    <property type="entry name" value="Aspartate Aminotransferase, domain 1"/>
    <property type="match status" value="1"/>
</dbReference>
<dbReference type="Gene3D" id="3.40.640.10">
    <property type="entry name" value="Type I PLP-dependent aspartate aminotransferase-like (Major domain)"/>
    <property type="match status" value="1"/>
</dbReference>
<dbReference type="InterPro" id="IPR004631">
    <property type="entry name" value="4NH2But_aminotransferase_euk"/>
</dbReference>
<dbReference type="InterPro" id="IPR005814">
    <property type="entry name" value="Aminotrans_3"/>
</dbReference>
<dbReference type="InterPro" id="IPR049704">
    <property type="entry name" value="Aminotrans_3_PPA_site"/>
</dbReference>
<dbReference type="InterPro" id="IPR015424">
    <property type="entry name" value="PyrdxlP-dep_Trfase"/>
</dbReference>
<dbReference type="InterPro" id="IPR015421">
    <property type="entry name" value="PyrdxlP-dep_Trfase_major"/>
</dbReference>
<dbReference type="InterPro" id="IPR015422">
    <property type="entry name" value="PyrdxlP-dep_Trfase_small"/>
</dbReference>
<dbReference type="NCBIfam" id="TIGR00699">
    <property type="entry name" value="GABAtrns_euk"/>
    <property type="match status" value="1"/>
</dbReference>
<dbReference type="PANTHER" id="PTHR43206:SF1">
    <property type="entry name" value="4-AMINOBUTYRATE AMINOTRANSFERASE, MITOCHONDRIAL"/>
    <property type="match status" value="1"/>
</dbReference>
<dbReference type="PANTHER" id="PTHR43206">
    <property type="entry name" value="AMINOTRANSFERASE"/>
    <property type="match status" value="1"/>
</dbReference>
<dbReference type="Pfam" id="PF00202">
    <property type="entry name" value="Aminotran_3"/>
    <property type="match status" value="1"/>
</dbReference>
<dbReference type="PIRSF" id="PIRSF000521">
    <property type="entry name" value="Transaminase_4ab_Lys_Orn"/>
    <property type="match status" value="1"/>
</dbReference>
<dbReference type="SUPFAM" id="SSF53383">
    <property type="entry name" value="PLP-dependent transferases"/>
    <property type="match status" value="1"/>
</dbReference>
<dbReference type="PROSITE" id="PS00600">
    <property type="entry name" value="AA_TRANSFER_CLASS_3"/>
    <property type="match status" value="1"/>
</dbReference>
<evidence type="ECO:0000250" key="1">
    <source>
        <dbReference type="UniProtKB" id="P17649"/>
    </source>
</evidence>
<evidence type="ECO:0000250" key="2">
    <source>
        <dbReference type="UniProtKB" id="P80147"/>
    </source>
</evidence>
<evidence type="ECO:0000256" key="3">
    <source>
        <dbReference type="SAM" id="MobiDB-lite"/>
    </source>
</evidence>
<evidence type="ECO:0000269" key="4">
    <source>
    </source>
</evidence>
<evidence type="ECO:0000269" key="5">
    <source>
    </source>
</evidence>
<evidence type="ECO:0000305" key="6"/>
<feature type="chain" id="PRO_0000120380" description="4-aminobutyrate aminotransferase">
    <location>
        <begin position="1"/>
        <end position="474"/>
    </location>
</feature>
<feature type="region of interest" description="Disordered" evidence="3">
    <location>
        <begin position="1"/>
        <end position="31"/>
    </location>
</feature>
<feature type="compositionally biased region" description="Polar residues" evidence="3">
    <location>
        <begin position="1"/>
        <end position="13"/>
    </location>
</feature>
<feature type="binding site" description="in other chain" evidence="2">
    <location>
        <begin position="142"/>
        <end position="143"/>
    </location>
    <ligand>
        <name>pyridoxal 5'-phosphate</name>
        <dbReference type="ChEBI" id="CHEBI:597326"/>
        <note>ligand shared between dimeric partners</note>
    </ligand>
</feature>
<feature type="binding site" evidence="2">
    <location>
        <position position="199"/>
    </location>
    <ligand>
        <name>substrate</name>
    </ligand>
</feature>
<feature type="binding site" evidence="2">
    <location>
        <position position="357"/>
    </location>
    <ligand>
        <name>pyridoxal 5'-phosphate</name>
        <dbReference type="ChEBI" id="CHEBI:597326"/>
        <note>ligand shared between dimeric partners</note>
    </ligand>
</feature>
<feature type="modified residue" description="N6-(pyridoxal phosphate)lysine" evidence="2">
    <location>
        <position position="333"/>
    </location>
</feature>
<sequence>MSSTATVTESTHFFPNEPQGPSIKTETIPGPKGKAAAEEMSKYHDISAVKFPVDYEKSIGNYLVDLDGNVLLDVYSQIATIPIGYNNPTLLKAAKSDEVATILMNRPALGNYPPKEWARVAYEGAIKYAPKGQKYVYFQMSGSDANEIAYKLAMLHHFNNKPRPTGDYTAEENESCLNNAAPGSPEVAVLSFRHSFHGRLFGSLSTTRSKPVHKLGMPAFPWPQADFPALKYPLEEHVEENAKEEQRCIDQVEQILTNHHCPVVACIIEPIQSEGGDNHASPDFFHKLQATLKKHDVKFIVDEVQTGVGSTGTLWAHEQWNLPYPPDMVTFSKKFQAAGIFYHDLALRPHAYQHFNTWMGDPFRAVQSRYILQEIQDKDLLNNVKSVGDFLYAGLEELARKHPGKINNLRGKGKGTFIAWDCESPAARDKFCADMRINGVNIGGCGVAAIRLRPMLVFQKHHAQILLKKIDELI</sequence>
<proteinExistence type="evidence at protein level"/>